<gene>
    <name type="primary">LDB19</name>
    <name type="ordered locus">ACR291C</name>
</gene>
<feature type="chain" id="PRO_0000240387" description="Protein LDB19">
    <location>
        <begin position="1"/>
        <end position="684"/>
    </location>
</feature>
<feature type="region of interest" description="Disordered" evidence="2">
    <location>
        <begin position="462"/>
        <end position="483"/>
    </location>
</feature>
<feature type="region of interest" description="Disordered" evidence="2">
    <location>
        <begin position="510"/>
        <end position="531"/>
    </location>
</feature>
<feature type="region of interest" description="Disordered" evidence="2">
    <location>
        <begin position="593"/>
        <end position="632"/>
    </location>
</feature>
<feature type="compositionally biased region" description="Low complexity" evidence="2">
    <location>
        <begin position="593"/>
        <end position="602"/>
    </location>
</feature>
<name>LDB19_EREGS</name>
<proteinExistence type="inferred from homology"/>
<dbReference type="EMBL" id="AE016816">
    <property type="protein sequence ID" value="AAS51517.1"/>
    <property type="molecule type" value="Genomic_DNA"/>
</dbReference>
<dbReference type="RefSeq" id="NP_983693.1">
    <property type="nucleotide sequence ID" value="NM_209046.1"/>
</dbReference>
<dbReference type="FunCoup" id="Q75BI0">
    <property type="interactions" value="30"/>
</dbReference>
<dbReference type="STRING" id="284811.Q75BI0"/>
<dbReference type="EnsemblFungi" id="AAS51517">
    <property type="protein sequence ID" value="AAS51517"/>
    <property type="gene ID" value="AGOS_ACR291C"/>
</dbReference>
<dbReference type="GeneID" id="4619828"/>
<dbReference type="KEGG" id="ago:AGOS_ACR291C"/>
<dbReference type="eggNOG" id="ENOG502QS9U">
    <property type="taxonomic scope" value="Eukaryota"/>
</dbReference>
<dbReference type="HOGENOM" id="CLU_012509_0_0_1"/>
<dbReference type="InParanoid" id="Q75BI0"/>
<dbReference type="OMA" id="LRMQFKL"/>
<dbReference type="OrthoDB" id="3832628at2759"/>
<dbReference type="Proteomes" id="UP000000591">
    <property type="component" value="Chromosome III"/>
</dbReference>
<dbReference type="GO" id="GO:0005737">
    <property type="term" value="C:cytoplasm"/>
    <property type="evidence" value="ECO:0000318"/>
    <property type="project" value="GO_Central"/>
</dbReference>
<dbReference type="GO" id="GO:0005829">
    <property type="term" value="C:cytosol"/>
    <property type="evidence" value="ECO:0000318"/>
    <property type="project" value="GO_Central"/>
</dbReference>
<dbReference type="GO" id="GO:0000138">
    <property type="term" value="C:Golgi trans cisterna"/>
    <property type="evidence" value="ECO:0007669"/>
    <property type="project" value="EnsemblFungi"/>
</dbReference>
<dbReference type="GO" id="GO:0005886">
    <property type="term" value="C:plasma membrane"/>
    <property type="evidence" value="ECO:0000318"/>
    <property type="project" value="GO_Central"/>
</dbReference>
<dbReference type="GO" id="GO:0030674">
    <property type="term" value="F:protein-macromolecule adaptor activity"/>
    <property type="evidence" value="ECO:0000318"/>
    <property type="project" value="GO_Central"/>
</dbReference>
<dbReference type="GO" id="GO:0031625">
    <property type="term" value="F:ubiquitin protein ligase binding"/>
    <property type="evidence" value="ECO:0000318"/>
    <property type="project" value="GO_Central"/>
</dbReference>
<dbReference type="GO" id="GO:0071230">
    <property type="term" value="P:cellular response to amino acid stimulus"/>
    <property type="evidence" value="ECO:0007669"/>
    <property type="project" value="EnsemblFungi"/>
</dbReference>
<dbReference type="GO" id="GO:0033554">
    <property type="term" value="P:cellular response to stress"/>
    <property type="evidence" value="ECO:0007669"/>
    <property type="project" value="EnsemblFungi"/>
</dbReference>
<dbReference type="GO" id="GO:0002092">
    <property type="term" value="P:positive regulation of receptor internalization"/>
    <property type="evidence" value="ECO:0007669"/>
    <property type="project" value="EnsemblFungi"/>
</dbReference>
<dbReference type="GO" id="GO:0070086">
    <property type="term" value="P:ubiquitin-dependent endocytosis"/>
    <property type="evidence" value="ECO:0000318"/>
    <property type="project" value="GO_Central"/>
</dbReference>
<dbReference type="InterPro" id="IPR050357">
    <property type="entry name" value="Arrestin_domain-protein"/>
</dbReference>
<dbReference type="InterPro" id="IPR024391">
    <property type="entry name" value="LDB19_N"/>
</dbReference>
<dbReference type="PANTHER" id="PTHR11188">
    <property type="entry name" value="ARRESTIN DOMAIN CONTAINING PROTEIN"/>
    <property type="match status" value="1"/>
</dbReference>
<dbReference type="PANTHER" id="PTHR11188:SF76">
    <property type="entry name" value="PROTEIN LDB19"/>
    <property type="match status" value="1"/>
</dbReference>
<dbReference type="Pfam" id="PF13002">
    <property type="entry name" value="LDB19"/>
    <property type="match status" value="1"/>
</dbReference>
<protein>
    <recommendedName>
        <fullName>Protein LDB19</fullName>
    </recommendedName>
</protein>
<evidence type="ECO:0000250" key="1"/>
<evidence type="ECO:0000256" key="2">
    <source>
        <dbReference type="SAM" id="MobiDB-lite"/>
    </source>
</evidence>
<evidence type="ECO:0000305" key="3"/>
<reference key="1">
    <citation type="journal article" date="2004" name="Science">
        <title>The Ashbya gossypii genome as a tool for mapping the ancient Saccharomyces cerevisiae genome.</title>
        <authorList>
            <person name="Dietrich F.S."/>
            <person name="Voegeli S."/>
            <person name="Brachat S."/>
            <person name="Lerch A."/>
            <person name="Gates K."/>
            <person name="Steiner S."/>
            <person name="Mohr C."/>
            <person name="Poehlmann R."/>
            <person name="Luedi P."/>
            <person name="Choi S."/>
            <person name="Wing R.A."/>
            <person name="Flavier A."/>
            <person name="Gaffney T.D."/>
            <person name="Philippsen P."/>
        </authorList>
    </citation>
    <scope>NUCLEOTIDE SEQUENCE [LARGE SCALE GENOMIC DNA]</scope>
    <source>
        <strain>ATCC 10895 / CBS 109.51 / FGSC 9923 / NRRL Y-1056</strain>
    </source>
</reference>
<reference key="2">
    <citation type="journal article" date="2013" name="G3 (Bethesda)">
        <title>Genomes of Ashbya fungi isolated from insects reveal four mating-type loci, numerous translocations, lack of transposons, and distinct gene duplications.</title>
        <authorList>
            <person name="Dietrich F.S."/>
            <person name="Voegeli S."/>
            <person name="Kuo S."/>
            <person name="Philippsen P."/>
        </authorList>
    </citation>
    <scope>GENOME REANNOTATION</scope>
    <source>
        <strain>ATCC 10895 / CBS 109.51 / FGSC 9923 / NRRL Y-1056</strain>
    </source>
</reference>
<comment type="function">
    <text evidence="1">May be involved in protein-linked oligosaccharide phosphorylation.</text>
</comment>
<comment type="subcellular location">
    <subcellularLocation>
        <location evidence="1">Cytoplasm</location>
    </subcellularLocation>
    <subcellularLocation>
        <location evidence="1">Golgi apparatus</location>
    </subcellularLocation>
</comment>
<comment type="similarity">
    <text evidence="3">Belongs to the LDB19 family.</text>
</comment>
<accession>Q75BI0</accession>
<keyword id="KW-0963">Cytoplasm</keyword>
<keyword id="KW-0333">Golgi apparatus</keyword>
<keyword id="KW-1185">Reference proteome</keyword>
<organism>
    <name type="scientific">Eremothecium gossypii (strain ATCC 10895 / CBS 109.51 / FGSC 9923 / NRRL Y-1056)</name>
    <name type="common">Yeast</name>
    <name type="synonym">Ashbya gossypii</name>
    <dbReference type="NCBI Taxonomy" id="284811"/>
    <lineage>
        <taxon>Eukaryota</taxon>
        <taxon>Fungi</taxon>
        <taxon>Dikarya</taxon>
        <taxon>Ascomycota</taxon>
        <taxon>Saccharomycotina</taxon>
        <taxon>Saccharomycetes</taxon>
        <taxon>Saccharomycetales</taxon>
        <taxon>Saccharomycetaceae</taxon>
        <taxon>Eremothecium</taxon>
    </lineage>
</organism>
<sequence>MVFPRLVATGRRGSAGGSDHVVELGLEIESPPCVLYGPPTESAGALLSGLVTVHVQGAGAEAGGCVVARLTLVLEQQVTYGRPFVAGPLGSCAACRERRRELARWEVVAQAAELAGGRHAYPFSHLLAGELPATSTLGSAGATQIRYELVADAVYRAGGGEERRRELRLPVLVTRSILRGPDRNSLRVFPPTDVTATAVLPSVIYPRSTIPLELQLGGVCCADRRWRMRRLTWRIDEKVRVRSHACAAHRARLRALEEEVRAKTARNLKKPAKPIKRTPDMGPQVTVSVATVEDPLPFDAGSAAARQEADVGNMDDDADTQSAFIHPSDHAMQQELQELQARIRQQQLEEERKQETSHYIEEVRTIAGTDIRSGWKSDFSGSGKIELVMEIDCMKLNSGVTNPVNMVSTTSPYLARGQAPVNVTCDVEDPTLGISVNHLLLVEIIVAEEMLHYTNGQLLSKGEAQGEGEGQGEALAEAKPAGLAGSHADQRLAELSPMFANRNNSMFRASAEEHSPGLEPDGSTAGADKRIVGTPTGAARVLRMQFKLTMTERSGLGISWDDEVPPKYQQVKFLYPPSYDEAVSASVSEVSGSSRVVSGPESNPAVRAPVAASPTQPPAVREGPSSLGTSGSAARDMMFISESSTLCIGGESPSALPAVEDASLGHRVCVRKVSELLDTDRITQ</sequence>